<proteinExistence type="inferred from homology"/>
<comment type="catalytic activity">
    <reaction>
        <text>formate + acetyl-CoA = pyruvate + CoA</text>
        <dbReference type="Rhea" id="RHEA:11844"/>
        <dbReference type="ChEBI" id="CHEBI:15361"/>
        <dbReference type="ChEBI" id="CHEBI:15740"/>
        <dbReference type="ChEBI" id="CHEBI:57287"/>
        <dbReference type="ChEBI" id="CHEBI:57288"/>
        <dbReference type="EC" id="2.3.1.54"/>
    </reaction>
</comment>
<comment type="pathway">
    <text>Fermentation; pyruvate fermentation; formate from pyruvate: step 1/1.</text>
</comment>
<comment type="subunit">
    <text evidence="1">Homodimer.</text>
</comment>
<comment type="subcellular location">
    <subcellularLocation>
        <location evidence="1">Cytoplasm</location>
    </subcellularLocation>
</comment>
<comment type="miscellaneous">
    <text evidence="1">Several mechanisms have been proposed based on complexes formed with substrate analogs. After activation by the glycine radical, the cysteine radical, Cys-417, can abstract hydrogen atoms from the other active site cysteine, Cys-416, and from coenzyme A, and it can also transfer hydrogen atoms to product radicals. The other active site cysteine can attack the central carbonyl of pyruvate and covalently bind the product acetyl group (By similarity).</text>
</comment>
<comment type="similarity">
    <text evidence="4">Belongs to the glycyl radical enzyme (GRE) family. PFL subfamily.</text>
</comment>
<sequence length="787" mass="89122">MKTEVTENIFEQAWDGFKGTNWRDKASVTRFVQENYKPYDGDESFLAGPTERTLKVKKIIEDTKNHYEEVGFPFDTDRVTSIDKIPAGYIDANDKELELIYGMQNSELFRLNFMPRGGLRVAEKILTEHGLSVDPGLHDVLSQTMTSVNDGIFRAYTSAIRKARHAHTVTGLPDAYSRGRIIGVYARLALYGADYLMKEKAKEWDAITEINEENIRLKEEINMQYQALQEVVNFGALYGLDVSRPAMNVKEAIQWVNIAYMAVCRVINGAATSLGRVPIVLDIFAERDLARGTFTEQEIQEFVDDFVLKLRTMKFARAAAYDELYSGDPTFITTSMAGMGNDGRHRVTKMDYRFLNTLDTIGNAPEPNLTVLWDSKLPYSFKRYSMSMSHKHSSIQYEGVETMAKDGYGEMSCISCCVSPLDPENEEGRHNLQYFGARVNVLKAMLTGLNGGYDDVHKDYKVFDIEPVRDEILDYDTVMENFDKSLDWLTDTYVDAMNIIHYMTDKYNYEAVQMAFLPTKVRANMGFGICGFANTVDSLSAIKYAKVKTLRDENGYIYDYEVEGDFPRYGEDDDRADDIAKLVMKMYHEKLASHKLYKNAEATVSLLTITSNVAYSKQTGNSPVHKGVFLNEDGTVNKSKLEFFSPGANPSNKAKGGWLQNLRSLAKLEFKDANDGISLTTQVSPRALGKTRDEQVDNLVQILDGYFTPGALINGTEFAGQHVNLNVMDLKDVYDKIMRGEDVIVRISGYCVNTKYLTPEQKQELTERVFHEVLSNDDEEVMHTSNI</sequence>
<name>PFL_LACLA</name>
<organism>
    <name type="scientific">Lactococcus lactis subsp. lactis (strain IL1403)</name>
    <name type="common">Streptococcus lactis</name>
    <dbReference type="NCBI Taxonomy" id="272623"/>
    <lineage>
        <taxon>Bacteria</taxon>
        <taxon>Bacillati</taxon>
        <taxon>Bacillota</taxon>
        <taxon>Bacilli</taxon>
        <taxon>Lactobacillales</taxon>
        <taxon>Streptococcaceae</taxon>
        <taxon>Lactococcus</taxon>
    </lineage>
</organism>
<reference key="1">
    <citation type="journal article" date="1997" name="J. Bacteriol.">
        <title>Cloning, expression, and characterization of the Lactococcus lactis pfl gene, encoding pyruvate formate-lyase.</title>
        <authorList>
            <person name="Arnau J."/>
            <person name="Joergensen F."/>
            <person name="Madsen S.M."/>
            <person name="Vrang A."/>
            <person name="Israelsen H."/>
        </authorList>
    </citation>
    <scope>NUCLEOTIDE SEQUENCE [GENOMIC DNA]</scope>
    <source>
        <strain>DB1341</strain>
    </source>
</reference>
<reference key="2">
    <citation type="journal article" date="2001" name="Genome Res.">
        <title>The complete genome sequence of the lactic acid bacterium Lactococcus lactis ssp. lactis IL1403.</title>
        <authorList>
            <person name="Bolotin A."/>
            <person name="Wincker P."/>
            <person name="Mauger S."/>
            <person name="Jaillon O."/>
            <person name="Malarme K."/>
            <person name="Weissenbach J."/>
            <person name="Ehrlich S.D."/>
            <person name="Sorokin A."/>
        </authorList>
    </citation>
    <scope>NUCLEOTIDE SEQUENCE [LARGE SCALE GENOMIC DNA]</scope>
    <source>
        <strain>IL1403</strain>
    </source>
</reference>
<gene>
    <name type="primary">pfl</name>
    <name type="ordered locus">LL0664</name>
    <name type="ORF">L57408</name>
</gene>
<evidence type="ECO:0000250" key="1"/>
<evidence type="ECO:0000255" key="2">
    <source>
        <dbReference type="PROSITE-ProRule" id="PRU00493"/>
    </source>
</evidence>
<evidence type="ECO:0000255" key="3">
    <source>
        <dbReference type="PROSITE-ProRule" id="PRU00887"/>
    </source>
</evidence>
<evidence type="ECO:0000305" key="4"/>
<feature type="chain" id="PRO_0000166693" description="Formate acetyltransferase">
    <location>
        <begin position="1"/>
        <end position="787"/>
    </location>
</feature>
<feature type="domain" description="PFL" evidence="3">
    <location>
        <begin position="8"/>
        <end position="629"/>
    </location>
</feature>
<feature type="domain" description="Glycine radical" evidence="2">
    <location>
        <begin position="645"/>
        <end position="774"/>
    </location>
</feature>
<feature type="active site" description="S-acetylcysteine intermediate" evidence="1">
    <location>
        <position position="416"/>
    </location>
</feature>
<feature type="active site" description="Cysteine radical intermediate" evidence="1">
    <location>
        <position position="417"/>
    </location>
</feature>
<feature type="modified residue" description="Glycine radical" evidence="2">
    <location>
        <position position="749"/>
    </location>
</feature>
<protein>
    <recommendedName>
        <fullName>Formate acetyltransferase</fullName>
        <ecNumber>2.3.1.54</ecNumber>
    </recommendedName>
    <alternativeName>
        <fullName>Pyruvate formate-lyase</fullName>
    </alternativeName>
</protein>
<keyword id="KW-0012">Acyltransferase</keyword>
<keyword id="KW-0119">Carbohydrate metabolism</keyword>
<keyword id="KW-0963">Cytoplasm</keyword>
<keyword id="KW-0313">Glucose metabolism</keyword>
<keyword id="KW-0556">Organic radical</keyword>
<keyword id="KW-1185">Reference proteome</keyword>
<keyword id="KW-0808">Transferase</keyword>
<dbReference type="EC" id="2.3.1.54"/>
<dbReference type="EMBL" id="AJ000326">
    <property type="protein sequence ID" value="CAA03993.1"/>
    <property type="molecule type" value="Genomic_DNA"/>
</dbReference>
<dbReference type="EMBL" id="AE005176">
    <property type="protein sequence ID" value="AAK04762.1"/>
    <property type="molecule type" value="Genomic_DNA"/>
</dbReference>
<dbReference type="PIR" id="H86707">
    <property type="entry name" value="H86707"/>
</dbReference>
<dbReference type="RefSeq" id="NP_266820.1">
    <property type="nucleotide sequence ID" value="NC_002662.1"/>
</dbReference>
<dbReference type="SMR" id="O32797"/>
<dbReference type="PaxDb" id="272623-L57408"/>
<dbReference type="EnsemblBacteria" id="AAK04762">
    <property type="protein sequence ID" value="AAK04762"/>
    <property type="gene ID" value="L57408"/>
</dbReference>
<dbReference type="KEGG" id="lla:L57408"/>
<dbReference type="PATRIC" id="fig|272623.7.peg.711"/>
<dbReference type="eggNOG" id="COG1882">
    <property type="taxonomic scope" value="Bacteria"/>
</dbReference>
<dbReference type="HOGENOM" id="CLU_023898_0_0_9"/>
<dbReference type="OrthoDB" id="9803969at2"/>
<dbReference type="SABIO-RK" id="O32797"/>
<dbReference type="UniPathway" id="UPA00920">
    <property type="reaction ID" value="UER00891"/>
</dbReference>
<dbReference type="Proteomes" id="UP000002196">
    <property type="component" value="Chromosome"/>
</dbReference>
<dbReference type="GO" id="GO:0005829">
    <property type="term" value="C:cytosol"/>
    <property type="evidence" value="ECO:0007669"/>
    <property type="project" value="TreeGrafter"/>
</dbReference>
<dbReference type="GO" id="GO:0008861">
    <property type="term" value="F:formate C-acetyltransferase activity"/>
    <property type="evidence" value="ECO:0007669"/>
    <property type="project" value="UniProtKB-EC"/>
</dbReference>
<dbReference type="GO" id="GO:0006006">
    <property type="term" value="P:glucose metabolic process"/>
    <property type="evidence" value="ECO:0007669"/>
    <property type="project" value="UniProtKB-KW"/>
</dbReference>
<dbReference type="CDD" id="cd01678">
    <property type="entry name" value="PFL1"/>
    <property type="match status" value="1"/>
</dbReference>
<dbReference type="FunFam" id="3.20.70.20:FF:000011">
    <property type="entry name" value="Formate acetyltransferase"/>
    <property type="match status" value="1"/>
</dbReference>
<dbReference type="Gene3D" id="3.20.70.20">
    <property type="match status" value="1"/>
</dbReference>
<dbReference type="InterPro" id="IPR050244">
    <property type="entry name" value="Auton_GlycylRad_Cofactor"/>
</dbReference>
<dbReference type="InterPro" id="IPR005949">
    <property type="entry name" value="Form_AcTrfase"/>
</dbReference>
<dbReference type="InterPro" id="IPR019777">
    <property type="entry name" value="Form_AcTrfase_GR_CS"/>
</dbReference>
<dbReference type="InterPro" id="IPR001150">
    <property type="entry name" value="Gly_radical"/>
</dbReference>
<dbReference type="InterPro" id="IPR004184">
    <property type="entry name" value="PFL_dom"/>
</dbReference>
<dbReference type="NCBIfam" id="TIGR01255">
    <property type="entry name" value="pyr_form_ly_1"/>
    <property type="match status" value="1"/>
</dbReference>
<dbReference type="PANTHER" id="PTHR30191">
    <property type="entry name" value="FORMATE ACETYLTRANSFERASE"/>
    <property type="match status" value="1"/>
</dbReference>
<dbReference type="PANTHER" id="PTHR30191:SF8">
    <property type="entry name" value="FORMATE ACETYLTRANSFERASE"/>
    <property type="match status" value="1"/>
</dbReference>
<dbReference type="Pfam" id="PF01228">
    <property type="entry name" value="Gly_radical"/>
    <property type="match status" value="1"/>
</dbReference>
<dbReference type="Pfam" id="PF02901">
    <property type="entry name" value="PFL-like"/>
    <property type="match status" value="1"/>
</dbReference>
<dbReference type="PIRSF" id="PIRSF000379">
    <property type="entry name" value="For_Ac_trans_1"/>
    <property type="match status" value="1"/>
</dbReference>
<dbReference type="SUPFAM" id="SSF51998">
    <property type="entry name" value="PFL-like glycyl radical enzymes"/>
    <property type="match status" value="1"/>
</dbReference>
<dbReference type="PROSITE" id="PS00850">
    <property type="entry name" value="GLY_RADICAL_1"/>
    <property type="match status" value="1"/>
</dbReference>
<dbReference type="PROSITE" id="PS51149">
    <property type="entry name" value="GLY_RADICAL_2"/>
    <property type="match status" value="1"/>
</dbReference>
<dbReference type="PROSITE" id="PS51554">
    <property type="entry name" value="PFL"/>
    <property type="match status" value="1"/>
</dbReference>
<accession>O32797</accession>